<evidence type="ECO:0000250" key="1">
    <source>
        <dbReference type="UniProtKB" id="A0A0M3Q1Q3"/>
    </source>
</evidence>
<evidence type="ECO:0000250" key="2">
    <source>
        <dbReference type="UniProtKB" id="A0A1C9J6A7"/>
    </source>
</evidence>
<evidence type="ECO:0000250" key="3">
    <source>
        <dbReference type="UniProtKB" id="E2E2P0"/>
    </source>
</evidence>
<evidence type="ECO:0000250" key="4">
    <source>
        <dbReference type="UniProtKB" id="Q9X839"/>
    </source>
</evidence>
<evidence type="ECO:0000269" key="5">
    <source>
    </source>
</evidence>
<evidence type="ECO:0000269" key="6">
    <source ref="2"/>
</evidence>
<evidence type="ECO:0000269" key="7">
    <source ref="3"/>
</evidence>
<evidence type="ECO:0000303" key="8">
    <source>
    </source>
</evidence>
<evidence type="ECO:0000305" key="9"/>
<evidence type="ECO:0000305" key="10">
    <source>
    </source>
</evidence>
<comment type="function">
    <text evidence="5 6">Involved in the biosynthesis of phenolic sesquiterpenes natural products (Ref.2). Sesquiterpene synthase converting (2E,6E)-farnesyl diphosphate (FPP) to (E)-beta-caryophyllene and alpha-humulene (PubMed:20419468, Ref.2).</text>
</comment>
<comment type="catalytic activity">
    <reaction evidence="5 6">
        <text>(2E,6E)-farnesyl diphosphate = (-)-(E)-beta-caryophyllene + diphosphate</text>
        <dbReference type="Rhea" id="RHEA:28294"/>
        <dbReference type="ChEBI" id="CHEBI:10357"/>
        <dbReference type="ChEBI" id="CHEBI:33019"/>
        <dbReference type="ChEBI" id="CHEBI:175763"/>
        <dbReference type="EC" id="4.2.3.57"/>
    </reaction>
    <physiologicalReaction direction="left-to-right" evidence="5 6">
        <dbReference type="Rhea" id="RHEA:28295"/>
    </physiologicalReaction>
</comment>
<comment type="catalytic activity">
    <reaction evidence="5 6">
        <text>(2E,6E)-farnesyl diphosphate = alpha-humulene + diphosphate</text>
        <dbReference type="Rhea" id="RHEA:31895"/>
        <dbReference type="ChEBI" id="CHEBI:5768"/>
        <dbReference type="ChEBI" id="CHEBI:33019"/>
        <dbReference type="ChEBI" id="CHEBI:175763"/>
        <dbReference type="EC" id="4.2.3.104"/>
    </reaction>
    <physiologicalReaction direction="left-to-right" evidence="5 6">
        <dbReference type="Rhea" id="RHEA:31896"/>
    </physiologicalReaction>
</comment>
<comment type="cofactor">
    <cofactor evidence="3">
        <name>Mn(2+)</name>
        <dbReference type="ChEBI" id="CHEBI:29035"/>
    </cofactor>
    <cofactor evidence="3">
        <name>Mg(2+)</name>
        <dbReference type="ChEBI" id="CHEBI:18420"/>
    </cofactor>
    <text evidence="3">Binds 3 Mg(2+) or Mn(2+) ions per subunit.</text>
</comment>
<comment type="pathway">
    <text evidence="5 6">Secondary metabolite biosynthesis; terpenoid biosynthesis.</text>
</comment>
<comment type="subunit">
    <text evidence="1">Homodimer.</text>
</comment>
<comment type="tissue specificity">
    <text evidence="5 7">Expressed in peltate glandular trichomes (PubMed:20419468). Present at low levels in flowers, leaves and stems (Ref.3).</text>
</comment>
<comment type="domain">
    <text evidence="4">The Asp-Asp-Xaa-Xaa-Asp/Glu (DDXXD/E) motif is important for the catalytic activity, presumably through binding to Mg(2+).</text>
</comment>
<comment type="similarity">
    <text evidence="9">Belongs to the terpene synthase family.</text>
</comment>
<keyword id="KW-0456">Lyase</keyword>
<keyword id="KW-0464">Manganese</keyword>
<keyword id="KW-0479">Metal-binding</keyword>
<organism>
    <name type="scientific">Origanum vulgare</name>
    <name type="common">Wild marjoram</name>
    <dbReference type="NCBI Taxonomy" id="39352"/>
    <lineage>
        <taxon>Eukaryota</taxon>
        <taxon>Viridiplantae</taxon>
        <taxon>Streptophyta</taxon>
        <taxon>Embryophyta</taxon>
        <taxon>Tracheophyta</taxon>
        <taxon>Spermatophyta</taxon>
        <taxon>Magnoliopsida</taxon>
        <taxon>eudicotyledons</taxon>
        <taxon>Gunneridae</taxon>
        <taxon>Pentapetalae</taxon>
        <taxon>asterids</taxon>
        <taxon>lamiids</taxon>
        <taxon>Lamiales</taxon>
        <taxon>Lamiaceae</taxon>
        <taxon>Nepetoideae</taxon>
        <taxon>Mentheae</taxon>
        <taxon>Origanum</taxon>
    </lineage>
</organism>
<accession>E2E2N5</accession>
<sequence length="554" mass="64724">MEFPASVASLSANTVGSNDVLRRSIAYHPNIWGDFFLAHTSEFMEISIAEKEEHERLKEEIKKLLVQTEYDSILKLELIDSIQRLGVGYHFEKEIDRILRYVHQTYPIYDTENKDLRMLALRFRLLRQQGFHVPFDVLSEFIDAEGNLTESIAYDIQGILSLYEASNYGVLGEEILDKALDSCSSRLESLITDTDDDRLSRQVKEALKIPISKTLTRLGARKFISMYKEDDSHNEKLLKFAMLDFNMVQRLHQNELSHLTRWWKELDFANKLPFARDRLVECYFWIMGVYYEPRHEIARKILTKVIYMASVLDDIYDVYGTLDELTLFTSFVRRWDISGIDELPTYMRIYLRALFDVYVEMEEEMGKIGKSYAIEYAKEEMKRLAEVYFQEAQWFFSKYKPTMQEYMKVALLSSGYMMMTINSLAVIKDPITKKEFDWVVSEPPILKSSSIITRLMDDLAGYGSEEKHSAVHLYMNEKGVSEEEAFQELRKQVKNSWKNINKECLKLRPASVPILTTVVNFTRVIIVLYTDEDAYGNSKTKTKDMIKSILVDPV</sequence>
<gene>
    <name evidence="8" type="primary">TPS6</name>
</gene>
<name>BCPSD_ORIVU</name>
<proteinExistence type="evidence at protein level"/>
<feature type="chain" id="PRO_0000453320" description="(E)-beta-caryophyllene synthase">
    <location>
        <begin position="1"/>
        <end position="554"/>
    </location>
</feature>
<feature type="region of interest" description="Homodimerization" evidence="1">
    <location>
        <begin position="319"/>
        <end position="325"/>
    </location>
</feature>
<feature type="region of interest" description="Homodimerization" evidence="1">
    <location>
        <begin position="391"/>
        <end position="427"/>
    </location>
</feature>
<feature type="short sequence motif" description="DDXXD motif" evidence="4">
    <location>
        <begin position="313"/>
        <end position="317"/>
    </location>
</feature>
<feature type="binding site" evidence="2">
    <location>
        <position position="313"/>
    </location>
    <ligand>
        <name>Mn(2+)</name>
        <dbReference type="ChEBI" id="CHEBI:29035"/>
        <label>1</label>
    </ligand>
</feature>
<feature type="binding site" evidence="2">
    <location>
        <position position="313"/>
    </location>
    <ligand>
        <name>Mn(2+)</name>
        <dbReference type="ChEBI" id="CHEBI:29035"/>
        <label>2</label>
    </ligand>
</feature>
<feature type="binding site" evidence="2">
    <location>
        <position position="317"/>
    </location>
    <ligand>
        <name>Mn(2+)</name>
        <dbReference type="ChEBI" id="CHEBI:29035"/>
        <label>1</label>
    </ligand>
</feature>
<feature type="binding site" evidence="2">
    <location>
        <position position="317"/>
    </location>
    <ligand>
        <name>Mn(2+)</name>
        <dbReference type="ChEBI" id="CHEBI:29035"/>
        <label>2</label>
    </ligand>
</feature>
<feature type="binding site" evidence="2">
    <location>
        <position position="457"/>
    </location>
    <ligand>
        <name>Mn(2+)</name>
        <dbReference type="ChEBI" id="CHEBI:29035"/>
        <label>3</label>
    </ligand>
</feature>
<feature type="binding site" evidence="2">
    <location>
        <position position="465"/>
    </location>
    <ligand>
        <name>Mn(2+)</name>
        <dbReference type="ChEBI" id="CHEBI:29035"/>
        <label>3</label>
    </ligand>
</feature>
<reference key="1">
    <citation type="journal article" date="2010" name="Plant Mol. Biol.">
        <title>Terpene synthases of oregano (Origanum vulgare L.) and their roles in the pathway and regulation of terpene biosynthesis.</title>
        <authorList>
            <person name="Crocoll C."/>
            <person name="Asbach J."/>
            <person name="Novak J."/>
            <person name="Gershenzon J."/>
            <person name="Degenhardt J."/>
        </authorList>
    </citation>
    <scope>NUCLEOTIDE SEQUENCE [MRNA]</scope>
    <scope>FUNCTION</scope>
    <scope>CATALYTIC ACTIVITY</scope>
    <scope>PATHWAY</scope>
    <scope>TISSUE SPECIFICITY</scope>
    <source>
        <strain>cv. d06-01</strain>
        <tissue>Trichome gland</tissue>
    </source>
</reference>
<reference key="2">
    <citation type="thesis" date="2011" institute="Friedrich Schiller University of Jena" country="Germany">
        <title>Biosynthesis of the phenolic monoterpenes, thymol and carvacrol, by terpene synthases and cytochrome P450s in oregano and thyme.</title>
        <authorList>
            <person name="Crocoll C."/>
        </authorList>
    </citation>
    <scope>FUNCTION</scope>
    <scope>CATALYTIC ACTIVITY</scope>
    <scope>PATHWAY</scope>
</reference>
<reference key="3">
    <citation type="journal article" date="2018" name="Ind. Crops Prod.">
        <title>Divergence in tissue-specific expression patterns of genes associated with the terpenoid biosynthesis in two oregano species Origanum vulgare L., and Origanum majorana.</title>
        <authorList>
            <person name="Jan S."/>
            <person name="Mir J.I."/>
            <person name="Shafi W."/>
            <person name="Faktoo S.Z."/>
            <person name="Singh D.B."/>
            <person name="Wijaya L."/>
            <person name="Alyemeni M.N."/>
            <person name="Ahmad P."/>
        </authorList>
    </citation>
    <scope>TISSUE SPECIFICITY</scope>
</reference>
<protein>
    <recommendedName>
        <fullName evidence="10">(E)-beta-caryophyllene synthase</fullName>
        <ecNumber evidence="5 6">4.2.3.57</ecNumber>
    </recommendedName>
    <alternativeName>
        <fullName evidence="10">Alpha-humulene synthase</fullName>
        <ecNumber evidence="5 6">4.2.3.104</ecNumber>
    </alternativeName>
    <alternativeName>
        <fullName evidence="8">Terpene synthase 6</fullName>
        <shortName evidence="8">OvTPS6</shortName>
    </alternativeName>
</protein>
<dbReference type="EC" id="4.2.3.57" evidence="5 6"/>
<dbReference type="EC" id="4.2.3.104" evidence="5 6"/>
<dbReference type="EMBL" id="GU385970">
    <property type="protein sequence ID" value="ADK73616.1"/>
    <property type="molecule type" value="mRNA"/>
</dbReference>
<dbReference type="SMR" id="E2E2N5"/>
<dbReference type="UniPathway" id="UPA00213"/>
<dbReference type="GO" id="GO:0000287">
    <property type="term" value="F:magnesium ion binding"/>
    <property type="evidence" value="ECO:0007669"/>
    <property type="project" value="InterPro"/>
</dbReference>
<dbReference type="GO" id="GO:0042803">
    <property type="term" value="F:protein homodimerization activity"/>
    <property type="evidence" value="ECO:0000250"/>
    <property type="project" value="UniProtKB"/>
</dbReference>
<dbReference type="GO" id="GO:0010333">
    <property type="term" value="F:terpene synthase activity"/>
    <property type="evidence" value="ECO:0007669"/>
    <property type="project" value="InterPro"/>
</dbReference>
<dbReference type="GO" id="GO:0016102">
    <property type="term" value="P:diterpenoid biosynthetic process"/>
    <property type="evidence" value="ECO:0007669"/>
    <property type="project" value="InterPro"/>
</dbReference>
<dbReference type="CDD" id="cd00684">
    <property type="entry name" value="Terpene_cyclase_plant_C1"/>
    <property type="match status" value="1"/>
</dbReference>
<dbReference type="FunFam" id="1.10.600.10:FF:000007">
    <property type="entry name" value="Isoprene synthase, chloroplastic"/>
    <property type="match status" value="1"/>
</dbReference>
<dbReference type="FunFam" id="1.50.10.130:FF:000001">
    <property type="entry name" value="Isoprene synthase, chloroplastic"/>
    <property type="match status" value="1"/>
</dbReference>
<dbReference type="Gene3D" id="1.10.600.10">
    <property type="entry name" value="Farnesyl Diphosphate Synthase"/>
    <property type="match status" value="1"/>
</dbReference>
<dbReference type="Gene3D" id="1.50.10.130">
    <property type="entry name" value="Terpene synthase, N-terminal domain"/>
    <property type="match status" value="1"/>
</dbReference>
<dbReference type="InterPro" id="IPR008949">
    <property type="entry name" value="Isoprenoid_synthase_dom_sf"/>
</dbReference>
<dbReference type="InterPro" id="IPR034741">
    <property type="entry name" value="Terpene_cyclase-like_1_C"/>
</dbReference>
<dbReference type="InterPro" id="IPR044814">
    <property type="entry name" value="Terpene_cyclase_plant_C1"/>
</dbReference>
<dbReference type="InterPro" id="IPR001906">
    <property type="entry name" value="Terpene_synth_N"/>
</dbReference>
<dbReference type="InterPro" id="IPR036965">
    <property type="entry name" value="Terpene_synth_N_sf"/>
</dbReference>
<dbReference type="InterPro" id="IPR050148">
    <property type="entry name" value="Terpene_synthase-like"/>
</dbReference>
<dbReference type="InterPro" id="IPR005630">
    <property type="entry name" value="Terpene_synthase_metal-bd"/>
</dbReference>
<dbReference type="InterPro" id="IPR008930">
    <property type="entry name" value="Terpenoid_cyclase/PrenylTrfase"/>
</dbReference>
<dbReference type="PANTHER" id="PTHR31225:SF221">
    <property type="entry name" value="(-)-GERMACRENE D SYNTHASE"/>
    <property type="match status" value="1"/>
</dbReference>
<dbReference type="PANTHER" id="PTHR31225">
    <property type="entry name" value="OS04G0344100 PROTEIN-RELATED"/>
    <property type="match status" value="1"/>
</dbReference>
<dbReference type="Pfam" id="PF01397">
    <property type="entry name" value="Terpene_synth"/>
    <property type="match status" value="1"/>
</dbReference>
<dbReference type="Pfam" id="PF03936">
    <property type="entry name" value="Terpene_synth_C"/>
    <property type="match status" value="1"/>
</dbReference>
<dbReference type="SFLD" id="SFLDS00005">
    <property type="entry name" value="Isoprenoid_Synthase_Type_I"/>
    <property type="match status" value="1"/>
</dbReference>
<dbReference type="SFLD" id="SFLDG01019">
    <property type="entry name" value="Terpene_Cyclase_Like_1_C_Termi"/>
    <property type="match status" value="1"/>
</dbReference>
<dbReference type="SUPFAM" id="SSF48239">
    <property type="entry name" value="Terpenoid cyclases/Protein prenyltransferases"/>
    <property type="match status" value="1"/>
</dbReference>
<dbReference type="SUPFAM" id="SSF48576">
    <property type="entry name" value="Terpenoid synthases"/>
    <property type="match status" value="1"/>
</dbReference>